<sequence>MAAAAPAAAALTEAPAVPGTAEPETGDEDSREVRVLQSLRGRIYEAKNLLPYLGPNKMRDCFCTINLDQEEVYRTQVVEKSLSPYFSEEFYFEIPRTFQYLSFYVYDKNVLQRDLRIGKVAIKKEDLCSHSGKETWFSLQPIDSNSEVQGKVHLELKLNELITENGTVCQQLVVHIKACHGLPLINGQSCDPYATVSLVGPSRNDQKKTKVKKKTSNPQFNEVFYFEVTRSSSYTRKSQFQVEEEDIEKLEIRIDLWNNENLVQDVFLGEIKVPVNVLRNDSSHQAWYLLQPRDNGNKSSKPDDLGSLLLTLCYTEDYVLPSEYYGPLKALLLKSPDVQPVSASAAYILGEICRDQKDAVLPLVRLLLHHNKLVPFITAVADLDLKDTQDANAIFRGNSLATQCLTEMMKIVGGHYLKVTLKPVLDEICESSKSCEIDPVKLKEGDNVESNKENLYYYVDKVFSAIVGSSVSCPTVMCDIFYSLRQMAAKRFPNNPHVQYSAVSSFVFLRFFAVAILSPHAFHLRPHYPDTQTVRTLTLISKTIQIIGNWGCQSRRKSRFKKSVMCEFLKMFQEERYFTDVKKFLDEISSTETKESSGTSEPVHLKEGEMYKRAQGRTRIGKKNFKKRWFCLTSKELTYHKQQGKDAIYTIPVKNILAVEKLEESSFNKKNMFQVIHTEKTLYIQANNCVEANEWIDMLCRVSRCNHNRLSSFHPSAYLNGNWLCCQETSEGTPGCKPCTAGIPADIQIDIDEDRETERIYSVFTLSLLKLQKMEEACGSIAVYQGPQKEPGYSKFTIEDSVATFKTIQQIKSTIEKLDEPHEKYRKKRSSSAKYGSKENPIVGKIS</sequence>
<name>RASA2_RAT</name>
<comment type="function">
    <text>Inhibitory regulator of the Ras-cyclic AMP pathway. May bind inositol tetrakisphosphate (IP4) and phospholipids.</text>
</comment>
<comment type="subcellular location">
    <subcellularLocation>
        <location evidence="8">Cell membrane</location>
    </subcellularLocation>
</comment>
<comment type="tissue specificity">
    <text>Widely expressed. Higher expression in brain, placenta, and kidney.</text>
</comment>
<proteinExistence type="evidence at transcript level"/>
<evidence type="ECO:0000250" key="1">
    <source>
        <dbReference type="UniProtKB" id="P58069"/>
    </source>
</evidence>
<evidence type="ECO:0000250" key="2">
    <source>
        <dbReference type="UniProtKB" id="Q15283"/>
    </source>
</evidence>
<evidence type="ECO:0000255" key="3">
    <source>
        <dbReference type="PROSITE-ProRule" id="PRU00041"/>
    </source>
</evidence>
<evidence type="ECO:0000255" key="4">
    <source>
        <dbReference type="PROSITE-ProRule" id="PRU00145"/>
    </source>
</evidence>
<evidence type="ECO:0000255" key="5">
    <source>
        <dbReference type="PROSITE-ProRule" id="PRU00167"/>
    </source>
</evidence>
<evidence type="ECO:0000255" key="6">
    <source>
        <dbReference type="PROSITE-ProRule" id="PRU00432"/>
    </source>
</evidence>
<evidence type="ECO:0000256" key="7">
    <source>
        <dbReference type="SAM" id="MobiDB-lite"/>
    </source>
</evidence>
<evidence type="ECO:0000305" key="8"/>
<feature type="initiator methionine" description="Removed" evidence="2">
    <location>
        <position position="1"/>
    </location>
</feature>
<feature type="chain" id="PRO_0000056640" description="Ras GTPase-activating protein 2">
    <location>
        <begin position="2"/>
        <end position="847"/>
    </location>
</feature>
<feature type="domain" description="C2 1" evidence="3">
    <location>
        <begin position="19"/>
        <end position="137"/>
    </location>
</feature>
<feature type="domain" description="C2 2" evidence="3">
    <location>
        <begin position="148"/>
        <end position="288"/>
    </location>
</feature>
<feature type="domain" description="Ras-GAP" evidence="5">
    <location>
        <begin position="371"/>
        <end position="588"/>
    </location>
</feature>
<feature type="domain" description="PH" evidence="4">
    <location>
        <begin position="603"/>
        <end position="704"/>
    </location>
</feature>
<feature type="zinc finger region" description="Btk-type" evidence="6">
    <location>
        <begin position="706"/>
        <end position="742"/>
    </location>
</feature>
<feature type="region of interest" description="Disordered" evidence="7">
    <location>
        <begin position="1"/>
        <end position="31"/>
    </location>
</feature>
<feature type="region of interest" description="Disordered" evidence="7">
    <location>
        <begin position="819"/>
        <end position="847"/>
    </location>
</feature>
<feature type="compositionally biased region" description="Low complexity" evidence="7">
    <location>
        <begin position="1"/>
        <end position="18"/>
    </location>
</feature>
<feature type="binding site" evidence="6">
    <location>
        <position position="714"/>
    </location>
    <ligand>
        <name>Zn(2+)</name>
        <dbReference type="ChEBI" id="CHEBI:29105"/>
    </ligand>
</feature>
<feature type="binding site" evidence="6">
    <location>
        <position position="725"/>
    </location>
    <ligand>
        <name>Zn(2+)</name>
        <dbReference type="ChEBI" id="CHEBI:29105"/>
    </ligand>
</feature>
<feature type="binding site" evidence="6">
    <location>
        <position position="726"/>
    </location>
    <ligand>
        <name>Zn(2+)</name>
        <dbReference type="ChEBI" id="CHEBI:29105"/>
    </ligand>
</feature>
<feature type="binding site" evidence="6">
    <location>
        <position position="736"/>
    </location>
    <ligand>
        <name>Zn(2+)</name>
        <dbReference type="ChEBI" id="CHEBI:29105"/>
    </ligand>
</feature>
<feature type="site" description="Arginine finger; crucial for GTP hydrolysis by stabilizing the transition state" evidence="5">
    <location>
        <position position="396"/>
    </location>
</feature>
<feature type="modified residue" description="N-acetylalanine" evidence="2">
    <location>
        <position position="2"/>
    </location>
</feature>
<feature type="modified residue" description="Phosphoserine" evidence="1">
    <location>
        <position position="554"/>
    </location>
</feature>
<protein>
    <recommendedName>
        <fullName>Ras GTPase-activating protein 2</fullName>
    </recommendedName>
    <alternativeName>
        <fullName>GAP1m</fullName>
    </alternativeName>
</protein>
<reference key="1">
    <citation type="journal article" date="1994" name="Mol. Cell. Biol.">
        <title>A novel mammalian Ras GTPase-activating protein which has phospholipid-binding and Btk homology regions.</title>
        <authorList>
            <person name="Maekawa M."/>
            <person name="Li S."/>
            <person name="Iwamatsu A."/>
            <person name="Morishita T."/>
            <person name="Yokota K."/>
            <person name="Imai Y."/>
            <person name="Kohsaka S."/>
            <person name="Nakamura S."/>
            <person name="Hattori S."/>
        </authorList>
    </citation>
    <scope>NUCLEOTIDE SEQUENCE [MRNA]</scope>
    <source>
        <tissue>Brain</tissue>
    </source>
</reference>
<accession>Q63713</accession>
<organism>
    <name type="scientific">Rattus norvegicus</name>
    <name type="common">Rat</name>
    <dbReference type="NCBI Taxonomy" id="10116"/>
    <lineage>
        <taxon>Eukaryota</taxon>
        <taxon>Metazoa</taxon>
        <taxon>Chordata</taxon>
        <taxon>Craniata</taxon>
        <taxon>Vertebrata</taxon>
        <taxon>Euteleostomi</taxon>
        <taxon>Mammalia</taxon>
        <taxon>Eutheria</taxon>
        <taxon>Euarchontoglires</taxon>
        <taxon>Glires</taxon>
        <taxon>Rodentia</taxon>
        <taxon>Myomorpha</taxon>
        <taxon>Muroidea</taxon>
        <taxon>Muridae</taxon>
        <taxon>Murinae</taxon>
        <taxon>Rattus</taxon>
    </lineage>
</organism>
<keyword id="KW-0007">Acetylation</keyword>
<keyword id="KW-1003">Cell membrane</keyword>
<keyword id="KW-0343">GTPase activation</keyword>
<keyword id="KW-0472">Membrane</keyword>
<keyword id="KW-0479">Metal-binding</keyword>
<keyword id="KW-0597">Phosphoprotein</keyword>
<keyword id="KW-1185">Reference proteome</keyword>
<keyword id="KW-0677">Repeat</keyword>
<keyword id="KW-0862">Zinc</keyword>
<keyword id="KW-0863">Zinc-finger</keyword>
<dbReference type="EMBL" id="D30734">
    <property type="protein sequence ID" value="BAA06398.1"/>
    <property type="molecule type" value="mRNA"/>
</dbReference>
<dbReference type="PIR" id="A56039">
    <property type="entry name" value="A56039"/>
</dbReference>
<dbReference type="RefSeq" id="NP_001099194.1">
    <property type="nucleotide sequence ID" value="NM_001105724.1"/>
</dbReference>
<dbReference type="SMR" id="Q63713"/>
<dbReference type="FunCoup" id="Q63713">
    <property type="interactions" value="2456"/>
</dbReference>
<dbReference type="STRING" id="10116.ENSRNOP00000016327"/>
<dbReference type="GlyGen" id="Q63713">
    <property type="glycosylation" value="1 site"/>
</dbReference>
<dbReference type="PhosphoSitePlus" id="Q63713"/>
<dbReference type="PaxDb" id="10116-ENSRNOP00000016327"/>
<dbReference type="Ensembl" id="ENSRNOT00000016327.6">
    <property type="protein sequence ID" value="ENSRNOP00000016327.4"/>
    <property type="gene ID" value="ENSRNOG00000011909.7"/>
</dbReference>
<dbReference type="GeneID" id="25597"/>
<dbReference type="KEGG" id="rno:25597"/>
<dbReference type="UCSC" id="RGD:3538">
    <property type="organism name" value="rat"/>
</dbReference>
<dbReference type="AGR" id="RGD:3538"/>
<dbReference type="CTD" id="5922"/>
<dbReference type="RGD" id="3538">
    <property type="gene designation" value="Rasa2"/>
</dbReference>
<dbReference type="eggNOG" id="KOG2059">
    <property type="taxonomic scope" value="Eukaryota"/>
</dbReference>
<dbReference type="GeneTree" id="ENSGT00940000158201"/>
<dbReference type="HOGENOM" id="CLU_008096_1_1_1"/>
<dbReference type="InParanoid" id="Q63713"/>
<dbReference type="OMA" id="HVKACHG"/>
<dbReference type="OrthoDB" id="1562946at2759"/>
<dbReference type="PhylomeDB" id="Q63713"/>
<dbReference type="TreeFam" id="TF105302"/>
<dbReference type="Reactome" id="R-RNO-5658442">
    <property type="pathway name" value="Regulation of RAS by GAPs"/>
</dbReference>
<dbReference type="PRO" id="PR:Q63713"/>
<dbReference type="Proteomes" id="UP000002494">
    <property type="component" value="Chromosome 8"/>
</dbReference>
<dbReference type="Bgee" id="ENSRNOG00000011909">
    <property type="expression patterns" value="Expressed in thymus and 19 other cell types or tissues"/>
</dbReference>
<dbReference type="GO" id="GO:0005886">
    <property type="term" value="C:plasma membrane"/>
    <property type="evidence" value="ECO:0007669"/>
    <property type="project" value="UniProtKB-SubCell"/>
</dbReference>
<dbReference type="GO" id="GO:0005096">
    <property type="term" value="F:GTPase activator activity"/>
    <property type="evidence" value="ECO:0000314"/>
    <property type="project" value="RGD"/>
</dbReference>
<dbReference type="GO" id="GO:0005543">
    <property type="term" value="F:phospholipid binding"/>
    <property type="evidence" value="ECO:0007669"/>
    <property type="project" value="InterPro"/>
</dbReference>
<dbReference type="GO" id="GO:0008270">
    <property type="term" value="F:zinc ion binding"/>
    <property type="evidence" value="ECO:0007669"/>
    <property type="project" value="UniProtKB-KW"/>
</dbReference>
<dbReference type="GO" id="GO:0035556">
    <property type="term" value="P:intracellular signal transduction"/>
    <property type="evidence" value="ECO:0007669"/>
    <property type="project" value="InterPro"/>
</dbReference>
<dbReference type="GO" id="GO:0046580">
    <property type="term" value="P:negative regulation of Ras protein signal transduction"/>
    <property type="evidence" value="ECO:0007669"/>
    <property type="project" value="InterPro"/>
</dbReference>
<dbReference type="CDD" id="cd08401">
    <property type="entry name" value="C2A_RasA2_RasA3"/>
    <property type="match status" value="1"/>
</dbReference>
<dbReference type="CDD" id="cd04010">
    <property type="entry name" value="C2B_RasA3"/>
    <property type="match status" value="1"/>
</dbReference>
<dbReference type="CDD" id="cd13370">
    <property type="entry name" value="PH_GAP1m_mammal-like"/>
    <property type="match status" value="1"/>
</dbReference>
<dbReference type="FunFam" id="1.10.506.10:FF:000011">
    <property type="entry name" value="Ras GTPase-activating protein 2 isoform 3"/>
    <property type="match status" value="1"/>
</dbReference>
<dbReference type="FunFam" id="2.30.29.30:FF:000144">
    <property type="entry name" value="Ras GTPase-activating protein 2 isoform 3"/>
    <property type="match status" value="1"/>
</dbReference>
<dbReference type="FunFam" id="2.60.40.150:FF:000086">
    <property type="entry name" value="Ras GTPase-activating protein 2 isoform 3"/>
    <property type="match status" value="1"/>
</dbReference>
<dbReference type="FunFam" id="2.60.40.150:FF:000069">
    <property type="entry name" value="Ras GTPase-activating protein 4 isoform 1"/>
    <property type="match status" value="1"/>
</dbReference>
<dbReference type="Gene3D" id="2.60.40.150">
    <property type="entry name" value="C2 domain"/>
    <property type="match status" value="2"/>
</dbReference>
<dbReference type="Gene3D" id="1.10.506.10">
    <property type="entry name" value="GTPase Activation - p120gap, domain 1"/>
    <property type="match status" value="1"/>
</dbReference>
<dbReference type="Gene3D" id="2.30.29.30">
    <property type="entry name" value="Pleckstrin-homology domain (PH domain)/Phosphotyrosine-binding domain (PTB)"/>
    <property type="match status" value="1"/>
</dbReference>
<dbReference type="InterPro" id="IPR000008">
    <property type="entry name" value="C2_dom"/>
</dbReference>
<dbReference type="InterPro" id="IPR035892">
    <property type="entry name" value="C2_domain_sf"/>
</dbReference>
<dbReference type="InterPro" id="IPR011993">
    <property type="entry name" value="PH-like_dom_sf"/>
</dbReference>
<dbReference type="InterPro" id="IPR001849">
    <property type="entry name" value="PH_domain"/>
</dbReference>
<dbReference type="InterPro" id="IPR039360">
    <property type="entry name" value="Ras_GTPase"/>
</dbReference>
<dbReference type="InterPro" id="IPR037773">
    <property type="entry name" value="RASA2_PH"/>
</dbReference>
<dbReference type="InterPro" id="IPR023152">
    <property type="entry name" value="RasGAP_CS"/>
</dbReference>
<dbReference type="InterPro" id="IPR001936">
    <property type="entry name" value="RasGAP_dom"/>
</dbReference>
<dbReference type="InterPro" id="IPR008936">
    <property type="entry name" value="Rho_GTPase_activation_prot"/>
</dbReference>
<dbReference type="InterPro" id="IPR001562">
    <property type="entry name" value="Znf_Btk_motif"/>
</dbReference>
<dbReference type="PANTHER" id="PTHR10194:SF21">
    <property type="entry name" value="RAS GTPASE-ACTIVATING PROTEIN 2"/>
    <property type="match status" value="1"/>
</dbReference>
<dbReference type="PANTHER" id="PTHR10194">
    <property type="entry name" value="RAS GTPASE-ACTIVATING PROTEINS"/>
    <property type="match status" value="1"/>
</dbReference>
<dbReference type="Pfam" id="PF00779">
    <property type="entry name" value="BTK"/>
    <property type="match status" value="1"/>
</dbReference>
<dbReference type="Pfam" id="PF00168">
    <property type="entry name" value="C2"/>
    <property type="match status" value="2"/>
</dbReference>
<dbReference type="Pfam" id="PF00169">
    <property type="entry name" value="PH"/>
    <property type="match status" value="1"/>
</dbReference>
<dbReference type="Pfam" id="PF00616">
    <property type="entry name" value="RasGAP"/>
    <property type="match status" value="2"/>
</dbReference>
<dbReference type="PRINTS" id="PR00402">
    <property type="entry name" value="TECBTKDOMAIN"/>
</dbReference>
<dbReference type="SMART" id="SM00107">
    <property type="entry name" value="BTK"/>
    <property type="match status" value="1"/>
</dbReference>
<dbReference type="SMART" id="SM00239">
    <property type="entry name" value="C2"/>
    <property type="match status" value="2"/>
</dbReference>
<dbReference type="SMART" id="SM00233">
    <property type="entry name" value="PH"/>
    <property type="match status" value="1"/>
</dbReference>
<dbReference type="SMART" id="SM00323">
    <property type="entry name" value="RasGAP"/>
    <property type="match status" value="1"/>
</dbReference>
<dbReference type="SUPFAM" id="SSF49562">
    <property type="entry name" value="C2 domain (Calcium/lipid-binding domain, CaLB)"/>
    <property type="match status" value="2"/>
</dbReference>
<dbReference type="SUPFAM" id="SSF48350">
    <property type="entry name" value="GTPase activation domain, GAP"/>
    <property type="match status" value="1"/>
</dbReference>
<dbReference type="SUPFAM" id="SSF50729">
    <property type="entry name" value="PH domain-like"/>
    <property type="match status" value="1"/>
</dbReference>
<dbReference type="PROSITE" id="PS50004">
    <property type="entry name" value="C2"/>
    <property type="match status" value="2"/>
</dbReference>
<dbReference type="PROSITE" id="PS50003">
    <property type="entry name" value="PH_DOMAIN"/>
    <property type="match status" value="1"/>
</dbReference>
<dbReference type="PROSITE" id="PS00509">
    <property type="entry name" value="RAS_GTPASE_ACTIV_1"/>
    <property type="match status" value="1"/>
</dbReference>
<dbReference type="PROSITE" id="PS50018">
    <property type="entry name" value="RAS_GTPASE_ACTIV_2"/>
    <property type="match status" value="1"/>
</dbReference>
<dbReference type="PROSITE" id="PS51113">
    <property type="entry name" value="ZF_BTK"/>
    <property type="match status" value="1"/>
</dbReference>
<gene>
    <name type="primary">Rasa2</name>
</gene>